<name>COXX_TRIV2</name>
<organism>
    <name type="scientific">Trichormus variabilis (strain ATCC 29413 / PCC 7937)</name>
    <name type="common">Anabaena variabilis</name>
    <dbReference type="NCBI Taxonomy" id="240292"/>
    <lineage>
        <taxon>Bacteria</taxon>
        <taxon>Bacillati</taxon>
        <taxon>Cyanobacteriota</taxon>
        <taxon>Cyanophyceae</taxon>
        <taxon>Nostocales</taxon>
        <taxon>Nostocaceae</taxon>
        <taxon>Trichormus</taxon>
    </lineage>
</organism>
<sequence length="318" mass="35277">MIETNVSRRHHESFLQVIQSYYQLTKPRIIPLLLITTAGSMWIAAQGQVDPVLLLVTMAGGTLAAASAQTINCIYDRDIDYDMERTRHRPMPSGKVQVRDALIFAIALAVLSFTLLTVFANLLAASLALSGIIFYVLIYTHWLKRHSTQNIVIGGAAGAIPALVGWAAVTGTLSWSAWLIFAIVFLWTPPHFWALALMIRDDYAKVGIPMLPVVEGNAATVKQIWYYTLITVVATLLLVYPLHSSGIVYAAIAISLGAVFIRKSWRLLHNPEDRPTARELFLYSISYMMLLCLGMVIDSLPLTHHLINAVINQLHLIS</sequence>
<accession>Q3MFT6</accession>
<protein>
    <recommendedName>
        <fullName evidence="1">Protoheme IX farnesyltransferase</fullName>
        <ecNumber evidence="1">2.5.1.141</ecNumber>
    </recommendedName>
    <alternativeName>
        <fullName evidence="1">Heme B farnesyltransferase</fullName>
    </alternativeName>
    <alternativeName>
        <fullName evidence="1">Heme O synthase</fullName>
    </alternativeName>
</protein>
<keyword id="KW-0997">Cell inner membrane</keyword>
<keyword id="KW-1003">Cell membrane</keyword>
<keyword id="KW-0350">Heme biosynthesis</keyword>
<keyword id="KW-0472">Membrane</keyword>
<keyword id="KW-0808">Transferase</keyword>
<keyword id="KW-0812">Transmembrane</keyword>
<keyword id="KW-1133">Transmembrane helix</keyword>
<feature type="chain" id="PRO_0000326990" description="Protoheme IX farnesyltransferase">
    <location>
        <begin position="1"/>
        <end position="318"/>
    </location>
</feature>
<feature type="transmembrane region" description="Helical" evidence="1">
    <location>
        <begin position="29"/>
        <end position="49"/>
    </location>
</feature>
<feature type="transmembrane region" description="Helical" evidence="1">
    <location>
        <begin position="51"/>
        <end position="71"/>
    </location>
</feature>
<feature type="transmembrane region" description="Helical" evidence="1">
    <location>
        <begin position="102"/>
        <end position="122"/>
    </location>
</feature>
<feature type="transmembrane region" description="Helical" evidence="1">
    <location>
        <begin position="123"/>
        <end position="143"/>
    </location>
</feature>
<feature type="transmembrane region" description="Helical" evidence="1">
    <location>
        <begin position="151"/>
        <end position="171"/>
    </location>
</feature>
<feature type="transmembrane region" description="Helical" evidence="1">
    <location>
        <begin position="179"/>
        <end position="199"/>
    </location>
</feature>
<feature type="transmembrane region" description="Helical" evidence="1">
    <location>
        <begin position="219"/>
        <end position="239"/>
    </location>
</feature>
<feature type="transmembrane region" description="Helical" evidence="1">
    <location>
        <begin position="241"/>
        <end position="261"/>
    </location>
</feature>
<feature type="transmembrane region" description="Helical" evidence="1">
    <location>
        <begin position="280"/>
        <end position="300"/>
    </location>
</feature>
<dbReference type="EC" id="2.5.1.141" evidence="1"/>
<dbReference type="EMBL" id="CP000117">
    <property type="protein sequence ID" value="ABA20150.1"/>
    <property type="molecule type" value="Genomic_DNA"/>
</dbReference>
<dbReference type="SMR" id="Q3MFT6"/>
<dbReference type="STRING" id="240292.Ava_0526"/>
<dbReference type="KEGG" id="ava:Ava_0526"/>
<dbReference type="eggNOG" id="COG0109">
    <property type="taxonomic scope" value="Bacteria"/>
</dbReference>
<dbReference type="HOGENOM" id="CLU_029631_0_2_3"/>
<dbReference type="UniPathway" id="UPA00834">
    <property type="reaction ID" value="UER00712"/>
</dbReference>
<dbReference type="Proteomes" id="UP000002533">
    <property type="component" value="Chromosome"/>
</dbReference>
<dbReference type="GO" id="GO:0005886">
    <property type="term" value="C:plasma membrane"/>
    <property type="evidence" value="ECO:0007669"/>
    <property type="project" value="UniProtKB-SubCell"/>
</dbReference>
<dbReference type="GO" id="GO:0008495">
    <property type="term" value="F:protoheme IX farnesyltransferase activity"/>
    <property type="evidence" value="ECO:0007669"/>
    <property type="project" value="UniProtKB-UniRule"/>
</dbReference>
<dbReference type="GO" id="GO:0048034">
    <property type="term" value="P:heme O biosynthetic process"/>
    <property type="evidence" value="ECO:0007669"/>
    <property type="project" value="UniProtKB-UniRule"/>
</dbReference>
<dbReference type="CDD" id="cd13957">
    <property type="entry name" value="PT_UbiA_Cox10"/>
    <property type="match status" value="1"/>
</dbReference>
<dbReference type="FunFam" id="1.10.357.140:FF:000001">
    <property type="entry name" value="Protoheme IX farnesyltransferase"/>
    <property type="match status" value="1"/>
</dbReference>
<dbReference type="Gene3D" id="1.10.357.140">
    <property type="entry name" value="UbiA prenyltransferase"/>
    <property type="match status" value="1"/>
</dbReference>
<dbReference type="HAMAP" id="MF_00154">
    <property type="entry name" value="CyoE_CtaB"/>
    <property type="match status" value="1"/>
</dbReference>
<dbReference type="InterPro" id="IPR006369">
    <property type="entry name" value="Protohaem_IX_farnesylTrfase"/>
</dbReference>
<dbReference type="InterPro" id="IPR000537">
    <property type="entry name" value="UbiA_prenyltransferase"/>
</dbReference>
<dbReference type="InterPro" id="IPR030470">
    <property type="entry name" value="UbiA_prenylTrfase_CS"/>
</dbReference>
<dbReference type="InterPro" id="IPR044878">
    <property type="entry name" value="UbiA_sf"/>
</dbReference>
<dbReference type="NCBIfam" id="TIGR01473">
    <property type="entry name" value="cyoE_ctaB"/>
    <property type="match status" value="1"/>
</dbReference>
<dbReference type="NCBIfam" id="NF003349">
    <property type="entry name" value="PRK04375.1-2"/>
    <property type="match status" value="1"/>
</dbReference>
<dbReference type="PANTHER" id="PTHR43448:SF7">
    <property type="entry name" value="4-HYDROXYBENZOATE SOLANESYLTRANSFERASE"/>
    <property type="match status" value="1"/>
</dbReference>
<dbReference type="PANTHER" id="PTHR43448">
    <property type="entry name" value="PROTOHEME IX FARNESYLTRANSFERASE, MITOCHONDRIAL"/>
    <property type="match status" value="1"/>
</dbReference>
<dbReference type="Pfam" id="PF01040">
    <property type="entry name" value="UbiA"/>
    <property type="match status" value="1"/>
</dbReference>
<dbReference type="PROSITE" id="PS00943">
    <property type="entry name" value="UBIA"/>
    <property type="match status" value="1"/>
</dbReference>
<comment type="function">
    <text evidence="1">Converts heme B (protoheme IX) to heme O by substitution of the vinyl group on carbon 2 of heme B porphyrin ring with a hydroxyethyl farnesyl side group.</text>
</comment>
<comment type="catalytic activity">
    <reaction evidence="1">
        <text>heme b + (2E,6E)-farnesyl diphosphate + H2O = Fe(II)-heme o + diphosphate</text>
        <dbReference type="Rhea" id="RHEA:28070"/>
        <dbReference type="ChEBI" id="CHEBI:15377"/>
        <dbReference type="ChEBI" id="CHEBI:33019"/>
        <dbReference type="ChEBI" id="CHEBI:60344"/>
        <dbReference type="ChEBI" id="CHEBI:60530"/>
        <dbReference type="ChEBI" id="CHEBI:175763"/>
        <dbReference type="EC" id="2.5.1.141"/>
    </reaction>
</comment>
<comment type="pathway">
    <text evidence="1">Porphyrin-containing compound metabolism; heme O biosynthesis; heme O from protoheme: step 1/1.</text>
</comment>
<comment type="subcellular location">
    <subcellularLocation>
        <location evidence="1">Cell inner membrane</location>
        <topology evidence="1">Multi-pass membrane protein</topology>
    </subcellularLocation>
</comment>
<comment type="miscellaneous">
    <text evidence="1">Carbon 2 of the heme B porphyrin ring is defined according to the Fischer nomenclature.</text>
</comment>
<comment type="similarity">
    <text evidence="1">Belongs to the UbiA prenyltransferase family. Protoheme IX farnesyltransferase subfamily.</text>
</comment>
<gene>
    <name evidence="1" type="primary">ctaB</name>
    <name type="ordered locus">Ava_0526</name>
</gene>
<evidence type="ECO:0000255" key="1">
    <source>
        <dbReference type="HAMAP-Rule" id="MF_00154"/>
    </source>
</evidence>
<proteinExistence type="inferred from homology"/>
<reference key="1">
    <citation type="journal article" date="2014" name="Stand. Genomic Sci.">
        <title>Complete genome sequence of Anabaena variabilis ATCC 29413.</title>
        <authorList>
            <person name="Thiel T."/>
            <person name="Pratte B.S."/>
            <person name="Zhong J."/>
            <person name="Goodwin L."/>
            <person name="Copeland A."/>
            <person name="Lucas S."/>
            <person name="Han C."/>
            <person name="Pitluck S."/>
            <person name="Land M.L."/>
            <person name="Kyrpides N.C."/>
            <person name="Woyke T."/>
        </authorList>
    </citation>
    <scope>NUCLEOTIDE SEQUENCE [LARGE SCALE GENOMIC DNA]</scope>
    <source>
        <strain>ATCC 29413 / PCC 7937</strain>
    </source>
</reference>